<name>KRR1_DROPE</name>
<dbReference type="EMBL" id="CH479180">
    <property type="protein sequence ID" value="EDW29046.1"/>
    <property type="molecule type" value="Genomic_DNA"/>
</dbReference>
<dbReference type="SMR" id="B4G9L6"/>
<dbReference type="STRING" id="7234.B4G9L6"/>
<dbReference type="EnsemblMetazoa" id="FBtr0184242">
    <property type="protein sequence ID" value="FBpp0182734"/>
    <property type="gene ID" value="FBgn0156228"/>
</dbReference>
<dbReference type="EnsemblMetazoa" id="XM_002015014.2">
    <property type="protein sequence ID" value="XP_002015050.1"/>
    <property type="gene ID" value="LOC6589378"/>
</dbReference>
<dbReference type="GeneID" id="6589378"/>
<dbReference type="KEGG" id="dpe:6589378"/>
<dbReference type="CTD" id="33269"/>
<dbReference type="eggNOG" id="KOG2874">
    <property type="taxonomic scope" value="Eukaryota"/>
</dbReference>
<dbReference type="HOGENOM" id="CLU_040185_0_2_1"/>
<dbReference type="OMA" id="TPDIDKW"/>
<dbReference type="OrthoDB" id="441223at2759"/>
<dbReference type="PhylomeDB" id="B4G9L6"/>
<dbReference type="Proteomes" id="UP000008744">
    <property type="component" value="Unassembled WGS sequence"/>
</dbReference>
<dbReference type="GO" id="GO:0005730">
    <property type="term" value="C:nucleolus"/>
    <property type="evidence" value="ECO:0007669"/>
    <property type="project" value="UniProtKB-SubCell"/>
</dbReference>
<dbReference type="GO" id="GO:0005654">
    <property type="term" value="C:nucleoplasm"/>
    <property type="evidence" value="ECO:0007669"/>
    <property type="project" value="EnsemblMetazoa"/>
</dbReference>
<dbReference type="GO" id="GO:0032040">
    <property type="term" value="C:small-subunit processome"/>
    <property type="evidence" value="ECO:0007669"/>
    <property type="project" value="TreeGrafter"/>
</dbReference>
<dbReference type="GO" id="GO:0003723">
    <property type="term" value="F:RNA binding"/>
    <property type="evidence" value="ECO:0007669"/>
    <property type="project" value="UniProtKB-KW"/>
</dbReference>
<dbReference type="GO" id="GO:0006364">
    <property type="term" value="P:rRNA processing"/>
    <property type="evidence" value="ECO:0007669"/>
    <property type="project" value="UniProtKB-KW"/>
</dbReference>
<dbReference type="CDD" id="cd22393">
    <property type="entry name" value="KH-I_KRR1_rpt1"/>
    <property type="match status" value="1"/>
</dbReference>
<dbReference type="CDD" id="cd22394">
    <property type="entry name" value="KH-I_KRR1_rpt2"/>
    <property type="match status" value="1"/>
</dbReference>
<dbReference type="FunFam" id="3.30.1370.10:FF:000011">
    <property type="entry name" value="KRR1 small subunit processome component"/>
    <property type="match status" value="1"/>
</dbReference>
<dbReference type="FunFam" id="3.30.1370.10:FF:000014">
    <property type="entry name" value="KRR1 small subunit processome component"/>
    <property type="match status" value="1"/>
</dbReference>
<dbReference type="Gene3D" id="3.30.1370.10">
    <property type="entry name" value="K Homology domain, type 1"/>
    <property type="match status" value="2"/>
</dbReference>
<dbReference type="InterPro" id="IPR004087">
    <property type="entry name" value="KH_dom"/>
</dbReference>
<dbReference type="InterPro" id="IPR036612">
    <property type="entry name" value="KH_dom_type_1_sf"/>
</dbReference>
<dbReference type="InterPro" id="IPR041174">
    <property type="entry name" value="KRR1-like_KH1"/>
</dbReference>
<dbReference type="InterPro" id="IPR048550">
    <property type="entry name" value="KRR1-like_KH1_euk"/>
</dbReference>
<dbReference type="InterPro" id="IPR048548">
    <property type="entry name" value="KRR1-like_KH2"/>
</dbReference>
<dbReference type="InterPro" id="IPR048549">
    <property type="entry name" value="KRR1-like_KH2_euk"/>
</dbReference>
<dbReference type="InterPro" id="IPR024166">
    <property type="entry name" value="rRNA_assembly_KRR1"/>
</dbReference>
<dbReference type="PANTHER" id="PTHR12581">
    <property type="entry name" value="HIV-1 REV BINDING PROTEIN 2, 3"/>
    <property type="match status" value="1"/>
</dbReference>
<dbReference type="PANTHER" id="PTHR12581:SF0">
    <property type="entry name" value="KRR1 SMALL SUBUNIT PROCESSOME COMPONENT HOMOLOG"/>
    <property type="match status" value="1"/>
</dbReference>
<dbReference type="Pfam" id="PF17903">
    <property type="entry name" value="KH_KRR1_1st"/>
    <property type="match status" value="1"/>
</dbReference>
<dbReference type="Pfam" id="PF21800">
    <property type="entry name" value="KH_KRR1_2nd"/>
    <property type="match status" value="1"/>
</dbReference>
<dbReference type="PIRSF" id="PIRSF006515">
    <property type="entry name" value="KRR1"/>
    <property type="match status" value="1"/>
</dbReference>
<dbReference type="SMART" id="SM00322">
    <property type="entry name" value="KH"/>
    <property type="match status" value="1"/>
</dbReference>
<dbReference type="SUPFAM" id="SSF54791">
    <property type="entry name" value="Eukaryotic type KH-domain (KH-domain type I)"/>
    <property type="match status" value="1"/>
</dbReference>
<proteinExistence type="inferred from homology"/>
<accession>B4G9L6</accession>
<feature type="chain" id="PRO_0000415655" description="KRR1 small subunit processome component homolog">
    <location>
        <begin position="1"/>
        <end position="340"/>
    </location>
</feature>
<feature type="domain" description="KH" evidence="2">
    <location>
        <begin position="124"/>
        <end position="192"/>
    </location>
</feature>
<feature type="region of interest" description="Disordered" evidence="3">
    <location>
        <begin position="228"/>
        <end position="259"/>
    </location>
</feature>
<feature type="region of interest" description="Disordered" evidence="3">
    <location>
        <begin position="271"/>
        <end position="324"/>
    </location>
</feature>
<feature type="coiled-coil region" evidence="2">
    <location>
        <begin position="269"/>
        <end position="302"/>
    </location>
</feature>
<feature type="compositionally biased region" description="Basic residues" evidence="3">
    <location>
        <begin position="228"/>
        <end position="244"/>
    </location>
</feature>
<feature type="compositionally biased region" description="Basic and acidic residues" evidence="3">
    <location>
        <begin position="275"/>
        <end position="301"/>
    </location>
</feature>
<feature type="compositionally biased region" description="Basic and acidic residues" evidence="3">
    <location>
        <begin position="309"/>
        <end position="324"/>
    </location>
</feature>
<reference evidence="4" key="1">
    <citation type="journal article" date="2007" name="Nature">
        <title>Evolution of genes and genomes on the Drosophila phylogeny.</title>
        <authorList>
            <consortium name="Drosophila 12 genomes consortium"/>
        </authorList>
    </citation>
    <scope>NUCLEOTIDE SEQUENCE [LARGE SCALE GENOMIC DNA]</scope>
    <source>
        <strain evidence="4">MSH-3 / Tucson 14011-0111.49</strain>
    </source>
</reference>
<protein>
    <recommendedName>
        <fullName evidence="1">KRR1 small subunit processome component homolog</fullName>
    </recommendedName>
    <alternativeName>
        <fullName evidence="1">KRR-R motif-containing protein 1</fullName>
    </alternativeName>
    <alternativeName>
        <fullName evidence="1">Protein dribble</fullName>
    </alternativeName>
</protein>
<evidence type="ECO:0000250" key="1">
    <source>
        <dbReference type="UniProtKB" id="Q9VPU8"/>
    </source>
</evidence>
<evidence type="ECO:0000255" key="2"/>
<evidence type="ECO:0000256" key="3">
    <source>
        <dbReference type="SAM" id="MobiDB-lite"/>
    </source>
</evidence>
<evidence type="ECO:0000312" key="4">
    <source>
        <dbReference type="EMBL" id="EDW29046.1"/>
    </source>
</evidence>
<gene>
    <name evidence="1" type="primary">dbe</name>
    <name evidence="1" type="synonym">dribble</name>
    <name type="ORF">GL18627</name>
</gene>
<sequence>MSDSEEEIKQNTDPVDNAWSLKIPAFRQEDNPHGMVEESSFATLFPKYREKYLREVWPLVEQCVAEHQLKAELDLVEGSMVVKTTRKTWDPYIIIKSRDMIKLMARSVPFEQAKRVLQDDIGCDIIKIGNLVHKKEKFVKRRQRLIGPNGATLKSIELLTDCYVLVQGNTVSALGPYKGLQQVRDIVLETMNNVHPIYNIKALMIKRELMKDPKLANEDWSRFLPKFKNKNISKRKQPKSKKPKKEYTPFPPAQPESKIDKQLASGEYFLNQEQKQAKRNQERSAKQADAAKKQDERRNKDFVPPTEEAPSRKRQAEDSSKVDVKALKAKLVKANKKSKS</sequence>
<organism>
    <name type="scientific">Drosophila persimilis</name>
    <name type="common">Fruit fly</name>
    <dbReference type="NCBI Taxonomy" id="7234"/>
    <lineage>
        <taxon>Eukaryota</taxon>
        <taxon>Metazoa</taxon>
        <taxon>Ecdysozoa</taxon>
        <taxon>Arthropoda</taxon>
        <taxon>Hexapoda</taxon>
        <taxon>Insecta</taxon>
        <taxon>Pterygota</taxon>
        <taxon>Neoptera</taxon>
        <taxon>Endopterygota</taxon>
        <taxon>Diptera</taxon>
        <taxon>Brachycera</taxon>
        <taxon>Muscomorpha</taxon>
        <taxon>Ephydroidea</taxon>
        <taxon>Drosophilidae</taxon>
        <taxon>Drosophila</taxon>
        <taxon>Sophophora</taxon>
    </lineage>
</organism>
<comment type="function">
    <text evidence="1">Required for 40S ribosome biogenesis. Involved in nucleolar processing of pre-18S ribosomal RNA and ribosome assembly. Binds to RNA. Required for female germline development, cell viability during eye development and for survival of dividing cells and epithelial cells during early wing disk development (By similarity).</text>
</comment>
<comment type="subunit">
    <text evidence="1">Monomer. Component of the ribosomal small subunit (SSU) processome (By similarity).</text>
</comment>
<comment type="subcellular location">
    <subcellularLocation>
        <location evidence="1">Nucleus</location>
        <location evidence="1">Nucleolus</location>
    </subcellularLocation>
</comment>
<comment type="similarity">
    <text evidence="2">Belongs to the KRR1 family.</text>
</comment>
<keyword id="KW-0175">Coiled coil</keyword>
<keyword id="KW-0217">Developmental protein</keyword>
<keyword id="KW-0539">Nucleus</keyword>
<keyword id="KW-1185">Reference proteome</keyword>
<keyword id="KW-0687">Ribonucleoprotein</keyword>
<keyword id="KW-0690">Ribosome biogenesis</keyword>
<keyword id="KW-0694">RNA-binding</keyword>
<keyword id="KW-0698">rRNA processing</keyword>